<name>UBID_ENT38</name>
<reference key="1">
    <citation type="journal article" date="2010" name="PLoS Genet.">
        <title>Genome sequence of the plant growth promoting endophytic bacterium Enterobacter sp. 638.</title>
        <authorList>
            <person name="Taghavi S."/>
            <person name="van der Lelie D."/>
            <person name="Hoffman A."/>
            <person name="Zhang Y.B."/>
            <person name="Walla M.D."/>
            <person name="Vangronsveld J."/>
            <person name="Newman L."/>
            <person name="Monchy S."/>
        </authorList>
    </citation>
    <scope>NUCLEOTIDE SEQUENCE [LARGE SCALE GENOMIC DNA]</scope>
    <source>
        <strain>638</strain>
    </source>
</reference>
<protein>
    <recommendedName>
        <fullName evidence="1">3-octaprenyl-4-hydroxybenzoate carboxy-lyase</fullName>
        <ecNumber evidence="1">4.1.1.98</ecNumber>
    </recommendedName>
    <alternativeName>
        <fullName evidence="1">Polyprenyl p-hydroxybenzoate decarboxylase</fullName>
    </alternativeName>
</protein>
<proteinExistence type="inferred from homology"/>
<dbReference type="EC" id="4.1.1.98" evidence="1"/>
<dbReference type="EMBL" id="CP000653">
    <property type="protein sequence ID" value="ABP62607.1"/>
    <property type="status" value="ALT_INIT"/>
    <property type="molecule type" value="Genomic_DNA"/>
</dbReference>
<dbReference type="RefSeq" id="WP_015960912.1">
    <property type="nucleotide sequence ID" value="NC_009436.1"/>
</dbReference>
<dbReference type="SMR" id="A4WFX7"/>
<dbReference type="STRING" id="399742.Ent638_3952"/>
<dbReference type="KEGG" id="ent:Ent638_3952"/>
<dbReference type="eggNOG" id="COG0043">
    <property type="taxonomic scope" value="Bacteria"/>
</dbReference>
<dbReference type="HOGENOM" id="CLU_023348_4_1_6"/>
<dbReference type="UniPathway" id="UPA00232"/>
<dbReference type="Proteomes" id="UP000000230">
    <property type="component" value="Chromosome"/>
</dbReference>
<dbReference type="GO" id="GO:0005829">
    <property type="term" value="C:cytosol"/>
    <property type="evidence" value="ECO:0007669"/>
    <property type="project" value="TreeGrafter"/>
</dbReference>
<dbReference type="GO" id="GO:0005886">
    <property type="term" value="C:plasma membrane"/>
    <property type="evidence" value="ECO:0007669"/>
    <property type="project" value="UniProtKB-SubCell"/>
</dbReference>
<dbReference type="GO" id="GO:0008694">
    <property type="term" value="F:3-octaprenyl-4-hydroxybenzoate carboxy-lyase activity"/>
    <property type="evidence" value="ECO:0007669"/>
    <property type="project" value="UniProtKB-UniRule"/>
</dbReference>
<dbReference type="GO" id="GO:0046872">
    <property type="term" value="F:metal ion binding"/>
    <property type="evidence" value="ECO:0007669"/>
    <property type="project" value="UniProtKB-KW"/>
</dbReference>
<dbReference type="GO" id="GO:0006744">
    <property type="term" value="P:ubiquinone biosynthetic process"/>
    <property type="evidence" value="ECO:0007669"/>
    <property type="project" value="UniProtKB-UniRule"/>
</dbReference>
<dbReference type="FunFam" id="1.20.5.570:FF:000001">
    <property type="entry name" value="3-octaprenyl-4-hydroxybenzoate carboxy-lyase"/>
    <property type="match status" value="1"/>
</dbReference>
<dbReference type="FunFam" id="3.40.1670.10:FF:000001">
    <property type="entry name" value="3-octaprenyl-4-hydroxybenzoate carboxy-lyase"/>
    <property type="match status" value="1"/>
</dbReference>
<dbReference type="Gene3D" id="1.20.5.570">
    <property type="entry name" value="Single helix bin"/>
    <property type="match status" value="1"/>
</dbReference>
<dbReference type="Gene3D" id="3.40.1670.10">
    <property type="entry name" value="UbiD C-terminal domain-like"/>
    <property type="match status" value="1"/>
</dbReference>
<dbReference type="HAMAP" id="MF_01636">
    <property type="entry name" value="UbiD"/>
    <property type="match status" value="1"/>
</dbReference>
<dbReference type="InterPro" id="IPR002830">
    <property type="entry name" value="UbiD"/>
</dbReference>
<dbReference type="InterPro" id="IPR049381">
    <property type="entry name" value="UbiD-like_C"/>
</dbReference>
<dbReference type="InterPro" id="IPR049383">
    <property type="entry name" value="UbiD-like_N"/>
</dbReference>
<dbReference type="InterPro" id="IPR023677">
    <property type="entry name" value="UbiD_bacteria"/>
</dbReference>
<dbReference type="InterPro" id="IPR048304">
    <property type="entry name" value="UbiD_Rift_dom"/>
</dbReference>
<dbReference type="NCBIfam" id="NF008175">
    <property type="entry name" value="PRK10922.1"/>
    <property type="match status" value="1"/>
</dbReference>
<dbReference type="NCBIfam" id="TIGR00148">
    <property type="entry name" value="UbiD family decarboxylase"/>
    <property type="match status" value="1"/>
</dbReference>
<dbReference type="PANTHER" id="PTHR30108">
    <property type="entry name" value="3-OCTAPRENYL-4-HYDROXYBENZOATE CARBOXY-LYASE-RELATED"/>
    <property type="match status" value="1"/>
</dbReference>
<dbReference type="PANTHER" id="PTHR30108:SF17">
    <property type="entry name" value="FERULIC ACID DECARBOXYLASE 1"/>
    <property type="match status" value="1"/>
</dbReference>
<dbReference type="Pfam" id="PF01977">
    <property type="entry name" value="UbiD"/>
    <property type="match status" value="1"/>
</dbReference>
<dbReference type="Pfam" id="PF20696">
    <property type="entry name" value="UbiD_C"/>
    <property type="match status" value="1"/>
</dbReference>
<dbReference type="Pfam" id="PF20695">
    <property type="entry name" value="UbiD_N"/>
    <property type="match status" value="1"/>
</dbReference>
<dbReference type="SUPFAM" id="SSF50475">
    <property type="entry name" value="FMN-binding split barrel"/>
    <property type="match status" value="1"/>
</dbReference>
<dbReference type="SUPFAM" id="SSF143968">
    <property type="entry name" value="UbiD C-terminal domain-like"/>
    <property type="match status" value="1"/>
</dbReference>
<evidence type="ECO:0000255" key="1">
    <source>
        <dbReference type="HAMAP-Rule" id="MF_01636"/>
    </source>
</evidence>
<evidence type="ECO:0000305" key="2"/>
<comment type="function">
    <text evidence="1">Catalyzes the decarboxylation of 3-octaprenyl-4-hydroxy benzoate to 2-octaprenylphenol, an intermediate step in ubiquinone biosynthesis.</text>
</comment>
<comment type="catalytic activity">
    <reaction evidence="1">
        <text>a 4-hydroxy-3-(all-trans-polyprenyl)benzoate + H(+) = a 2-(all-trans-polyprenyl)phenol + CO2</text>
        <dbReference type="Rhea" id="RHEA:41680"/>
        <dbReference type="Rhea" id="RHEA-COMP:9514"/>
        <dbReference type="Rhea" id="RHEA-COMP:9516"/>
        <dbReference type="ChEBI" id="CHEBI:1269"/>
        <dbReference type="ChEBI" id="CHEBI:15378"/>
        <dbReference type="ChEBI" id="CHEBI:16526"/>
        <dbReference type="ChEBI" id="CHEBI:78396"/>
        <dbReference type="EC" id="4.1.1.98"/>
    </reaction>
</comment>
<comment type="cofactor">
    <cofactor evidence="1">
        <name>prenylated FMN</name>
        <dbReference type="ChEBI" id="CHEBI:87746"/>
    </cofactor>
    <text evidence="1">Binds 1 prenylated FMN per subunit.</text>
</comment>
<comment type="cofactor">
    <cofactor evidence="1">
        <name>Mn(2+)</name>
        <dbReference type="ChEBI" id="CHEBI:29035"/>
    </cofactor>
</comment>
<comment type="pathway">
    <text evidence="1">Cofactor biosynthesis; ubiquinone biosynthesis.</text>
</comment>
<comment type="subunit">
    <text evidence="1">Homohexamer.</text>
</comment>
<comment type="subcellular location">
    <subcellularLocation>
        <location evidence="1">Cell membrane</location>
        <topology evidence="1">Peripheral membrane protein</topology>
    </subcellularLocation>
</comment>
<comment type="similarity">
    <text evidence="1">Belongs to the UbiD family.</text>
</comment>
<comment type="sequence caution" evidence="2">
    <conflict type="erroneous initiation">
        <sequence resource="EMBL-CDS" id="ABP62607"/>
    </conflict>
</comment>
<keyword id="KW-1003">Cell membrane</keyword>
<keyword id="KW-0210">Decarboxylase</keyword>
<keyword id="KW-0285">Flavoprotein</keyword>
<keyword id="KW-0288">FMN</keyword>
<keyword id="KW-0456">Lyase</keyword>
<keyword id="KW-0464">Manganese</keyword>
<keyword id="KW-0472">Membrane</keyword>
<keyword id="KW-0479">Metal-binding</keyword>
<keyword id="KW-0831">Ubiquinone biosynthesis</keyword>
<feature type="chain" id="PRO_0000335862" description="3-octaprenyl-4-hydroxybenzoate carboxy-lyase">
    <location>
        <begin position="1"/>
        <end position="497"/>
    </location>
</feature>
<feature type="active site" description="Proton donor" evidence="1">
    <location>
        <position position="287"/>
    </location>
</feature>
<feature type="binding site" evidence="1">
    <location>
        <position position="172"/>
    </location>
    <ligand>
        <name>Mn(2+)</name>
        <dbReference type="ChEBI" id="CHEBI:29035"/>
    </ligand>
</feature>
<feature type="binding site" evidence="1">
    <location>
        <begin position="175"/>
        <end position="177"/>
    </location>
    <ligand>
        <name>prenylated FMN</name>
        <dbReference type="ChEBI" id="CHEBI:87746"/>
    </ligand>
</feature>
<feature type="binding site" evidence="1">
    <location>
        <begin position="189"/>
        <end position="191"/>
    </location>
    <ligand>
        <name>prenylated FMN</name>
        <dbReference type="ChEBI" id="CHEBI:87746"/>
    </ligand>
</feature>
<feature type="binding site" evidence="1">
    <location>
        <begin position="194"/>
        <end position="195"/>
    </location>
    <ligand>
        <name>prenylated FMN</name>
        <dbReference type="ChEBI" id="CHEBI:87746"/>
    </ligand>
</feature>
<feature type="binding site" evidence="1">
    <location>
        <position position="238"/>
    </location>
    <ligand>
        <name>Mn(2+)</name>
        <dbReference type="ChEBI" id="CHEBI:29035"/>
    </ligand>
</feature>
<gene>
    <name evidence="1" type="primary">ubiD</name>
    <name type="ordered locus">Ent638_3952</name>
</gene>
<organism>
    <name type="scientific">Enterobacter sp. (strain 638)</name>
    <dbReference type="NCBI Taxonomy" id="399742"/>
    <lineage>
        <taxon>Bacteria</taxon>
        <taxon>Pseudomonadati</taxon>
        <taxon>Pseudomonadota</taxon>
        <taxon>Gammaproteobacteria</taxon>
        <taxon>Enterobacterales</taxon>
        <taxon>Enterobacteriaceae</taxon>
        <taxon>Enterobacter</taxon>
    </lineage>
</organism>
<sequence>MKYHDLRDFLALLEKQGELKRITLPVDPYLEMTEIADRTLRAGGPALLFENPKGYSMPVLCNLFGTPKRVAMGMGQEDVSALREVGKLLAFLKEPEPPKGFRDLFDKLPQFKQVLNMPTKRLRGAPCQQKILEGDAVDLTRIPIMQCWPEDAAPLITWGLTVTRGPHKERQNLGIYRQQLIGKNKLIMRWLSHRGGALDFQEWCAAHPGERFPVSVALGADPATILGAVTPVPDTLSEYAFAGLLRGTKTEVVKCISNDLEVPASAEIVLEGYIEQGDMAPEGPYGDHTGYYNEIDNFPVFTVTHITQRDDAIYHSTYTGRPPDEPAVLGVALNEVFVPILQKQFPEIVDFYLPPEGCSYRLAVVTIKKQYAGHAKRVMMGVWSFLRQFMYTKFVIVCDDDVNARDWNDVIWAITTRMDPARDTVLVENTPIDYLDFASPVSGLGSKMGLDATNKWPGETSREWGRPIQKDPEVTARIDAIWDELAILNDGKPESDR</sequence>
<accession>A4WFX7</accession>